<name>RAB7_DROME</name>
<sequence length="207" mass="23331">MSGRKKSLLKVIILGDSSVGKTSLMNQYVNKRFSNQYKATIGADFCTKEVVVNDRVVTMQIWDTAGQERFQSLGVAFYRGADCCVLVYDVTAPNSFKNLDSWRDEFLIQASPRDPDHFPFVVLGNKVDLDNRQVSTRRAQQWCQSKNDIPYYETSAKEGINVEMAFQVIAKNALELEAEAEVINDFPDQITLGSQNNRPGNPDNCQC</sequence>
<organism evidence="45">
    <name type="scientific">Drosophila melanogaster</name>
    <name type="common">Fruit fly</name>
    <dbReference type="NCBI Taxonomy" id="7227"/>
    <lineage>
        <taxon>Eukaryota</taxon>
        <taxon>Metazoa</taxon>
        <taxon>Ecdysozoa</taxon>
        <taxon>Arthropoda</taxon>
        <taxon>Hexapoda</taxon>
        <taxon>Insecta</taxon>
        <taxon>Pterygota</taxon>
        <taxon>Neoptera</taxon>
        <taxon>Endopterygota</taxon>
        <taxon>Diptera</taxon>
        <taxon>Brachycera</taxon>
        <taxon>Muscomorpha</taxon>
        <taxon>Ephydroidea</taxon>
        <taxon>Drosophilidae</taxon>
        <taxon>Drosophila</taxon>
        <taxon>Sophophora</taxon>
    </lineage>
</organism>
<feature type="chain" id="PRO_0000459505" description="Ras-related protein Rab7">
    <location>
        <begin position="1"/>
        <end position="207"/>
    </location>
</feature>
<feature type="short sequence motif" description="Effector region" evidence="3">
    <location>
        <begin position="37"/>
        <end position="45"/>
    </location>
</feature>
<feature type="binding site" evidence="1">
    <location>
        <begin position="15"/>
        <end position="22"/>
    </location>
    <ligand>
        <name>GTP</name>
        <dbReference type="ChEBI" id="CHEBI:37565"/>
    </ligand>
</feature>
<feature type="binding site" evidence="1">
    <location>
        <begin position="34"/>
        <end position="40"/>
    </location>
    <ligand>
        <name>GTP</name>
        <dbReference type="ChEBI" id="CHEBI:37565"/>
    </ligand>
</feature>
<feature type="binding site" evidence="1">
    <location>
        <begin position="63"/>
        <end position="67"/>
    </location>
    <ligand>
        <name>GTP</name>
        <dbReference type="ChEBI" id="CHEBI:37565"/>
    </ligand>
</feature>
<feature type="binding site" evidence="1">
    <location>
        <begin position="125"/>
        <end position="128"/>
    </location>
    <ligand>
        <name>GTP</name>
        <dbReference type="ChEBI" id="CHEBI:37565"/>
    </ligand>
</feature>
<feature type="binding site" evidence="1">
    <location>
        <begin position="156"/>
        <end position="157"/>
    </location>
    <ligand>
        <name>GTP</name>
        <dbReference type="ChEBI" id="CHEBI:37565"/>
    </ligand>
</feature>
<feature type="lipid moiety-binding region" description="S-geranylgeranyl cysteine" evidence="2">
    <location>
        <position position="205"/>
    </location>
</feature>
<feature type="lipid moiety-binding region" description="S-geranylgeranyl cysteine" evidence="2">
    <location>
        <position position="207"/>
    </location>
</feature>
<feature type="mutagenesis site" description="GDP-bound stabilized constitutively inactive dominant negative mutant. No detectable effect on viability, lifespan or behavior in heterozygous individuals. Diffuse cytoplasmic localization. Cannot rescue null mutant or RNAi-mediated knockdown phenotype." evidence="6 12">
    <original>T</original>
    <variation>N</variation>
    <location>
        <position position="22"/>
    </location>
</feature>
<feature type="mutagenesis site" description="GTP-bound stabilized constitutively active mutant. Enhanced degradation of endocytosed signaling molecules leading to reduced range of signaling molecule concentration gradients. No detectable effect on viability, lifespan or behavior in heterozygous individuals. Increased association with enlarged late endosomal structures. Can rescue null mutant phenotype but slightly toxic at high levels." evidence="4 6">
    <original>Q</original>
    <variation>L</variation>
    <location>
        <position position="67"/>
    </location>
</feature>
<feature type="mutagenesis site" description="Mutation with reduced function that causes Charcot-Marie-Tooth 2B in humans. No detectable effect on viability, lifespan or behavior in heterozygous individuals. Associated with structures lacking other endosomal markers that accumulate in the center of motor neuron presynaptic boutons and in the photoreceptor synaptic layer. Reduced association with endosomal structures. Can rescue null mutant phenotype." evidence="6">
    <original>L</original>
    <variation>F</variation>
    <location>
        <position position="129"/>
    </location>
</feature>
<feature type="mutagenesis site" description="Mutation with reduced function that causes Charcot-Marie-Tooth 2B in humans. No detectable effect on viability, lifespan or behavior in heterozygous individuals. Associated with structures lacking other endosomal markers that accumulate in the center of motor neuron presynaptic boutons and in the photoreceptor synaptic layer. Reduced association with endosomal structures. Can rescue null mutant phenotype." evidence="6">
    <original>K</original>
    <variation>N</variation>
    <location>
        <position position="157"/>
    </location>
</feature>
<feature type="mutagenesis site" description="Mutation with reduced function that causes Charcot-Marie-Tooth 2B in humans. No detectable effect on viability, lifespan or behavior in heterozygous individuals. Associated with structures lacking other endosomal markers that accumulate in the center of motor neuron presynaptic boutons and in the photoreceptor synaptic layer. Reduced association with endosomal structures. Can rescue null mutant phenotype." evidence="6">
    <original>N</original>
    <variation>T</variation>
    <location>
        <position position="161"/>
    </location>
</feature>
<feature type="mutagenesis site" description="Mutation with reduced function that causes Charcot-Marie-Tooth 2B in humans. No detectable effect on viability, lifespan or behavior in heterozygous individuals. Associated with structures lacking other endosomal markers that accumulate in the center of motor neuron presynaptic boutons and in the photoreceptor synaptic layer. Reduced association with endosomal structures. Can rescue null mutant phenotype." evidence="6">
    <original>V</original>
    <variation>M</variation>
    <location>
        <position position="162"/>
    </location>
</feature>
<evidence type="ECO:0000250" key="1">
    <source>
        <dbReference type="UniProtKB" id="P51149"/>
    </source>
</evidence>
<evidence type="ECO:0000250" key="2">
    <source>
        <dbReference type="UniProtKB" id="P62822"/>
    </source>
</evidence>
<evidence type="ECO:0000255" key="3"/>
<evidence type="ECO:0000269" key="4">
    <source>
    </source>
</evidence>
<evidence type="ECO:0000269" key="5">
    <source>
    </source>
</evidence>
<evidence type="ECO:0000269" key="6">
    <source>
    </source>
</evidence>
<evidence type="ECO:0000269" key="7">
    <source>
    </source>
</evidence>
<evidence type="ECO:0000269" key="8">
    <source>
    </source>
</evidence>
<evidence type="ECO:0000269" key="9">
    <source>
    </source>
</evidence>
<evidence type="ECO:0000269" key="10">
    <source>
    </source>
</evidence>
<evidence type="ECO:0000269" key="11">
    <source>
    </source>
</evidence>
<evidence type="ECO:0000269" key="12">
    <source>
    </source>
</evidence>
<evidence type="ECO:0000303" key="13">
    <source>
    </source>
</evidence>
<evidence type="ECO:0000305" key="14"/>
<evidence type="ECO:0000305" key="15">
    <source>
    </source>
</evidence>
<evidence type="ECO:0000312" key="16">
    <source>
        <dbReference type="EMBL" id="AAC32270.1"/>
    </source>
</evidence>
<evidence type="ECO:0000312" key="17">
    <source>
        <dbReference type="EMBL" id="AAF56218.1"/>
    </source>
</evidence>
<evidence type="ECO:0000312" key="18">
    <source>
        <dbReference type="EMBL" id="AAF73041.1"/>
    </source>
</evidence>
<evidence type="ECO:0000312" key="19">
    <source>
        <dbReference type="EMBL" id="AAL25275.1"/>
    </source>
</evidence>
<evidence type="ECO:0000312" key="20">
    <source>
        <dbReference type="EMBL" id="ADF28796.1"/>
    </source>
</evidence>
<evidence type="ECO:0000312" key="21">
    <source>
        <dbReference type="EMBL" id="BAA88245.1"/>
    </source>
</evidence>
<evidence type="ECO:0000312" key="22">
    <source>
        <dbReference type="EMBL" id="CAL26809.1"/>
    </source>
</evidence>
<evidence type="ECO:0000312" key="23">
    <source>
        <dbReference type="EMBL" id="CAL26810.1"/>
    </source>
</evidence>
<evidence type="ECO:0000312" key="24">
    <source>
        <dbReference type="EMBL" id="CAL26811.1"/>
    </source>
</evidence>
<evidence type="ECO:0000312" key="25">
    <source>
        <dbReference type="EMBL" id="CAL26812.1"/>
    </source>
</evidence>
<evidence type="ECO:0000312" key="26">
    <source>
        <dbReference type="EMBL" id="CAL26813.1"/>
    </source>
</evidence>
<evidence type="ECO:0000312" key="27">
    <source>
        <dbReference type="EMBL" id="CAL26814.1"/>
    </source>
</evidence>
<evidence type="ECO:0000312" key="28">
    <source>
        <dbReference type="EMBL" id="CAL26815.1"/>
    </source>
</evidence>
<evidence type="ECO:0000312" key="29">
    <source>
        <dbReference type="EMBL" id="CAL26816.1"/>
    </source>
</evidence>
<evidence type="ECO:0000312" key="30">
    <source>
        <dbReference type="EMBL" id="CAL26817.1"/>
    </source>
</evidence>
<evidence type="ECO:0000312" key="31">
    <source>
        <dbReference type="EMBL" id="CAL26818.1"/>
    </source>
</evidence>
<evidence type="ECO:0000312" key="32">
    <source>
        <dbReference type="EMBL" id="CAL26819.1"/>
    </source>
</evidence>
<evidence type="ECO:0000312" key="33">
    <source>
        <dbReference type="EMBL" id="CAR93561.1"/>
    </source>
</evidence>
<evidence type="ECO:0000312" key="34">
    <source>
        <dbReference type="EMBL" id="CAR93562.1"/>
    </source>
</evidence>
<evidence type="ECO:0000312" key="35">
    <source>
        <dbReference type="EMBL" id="CAR93563.1"/>
    </source>
</evidence>
<evidence type="ECO:0000312" key="36">
    <source>
        <dbReference type="EMBL" id="CAR93564.1"/>
    </source>
</evidence>
<evidence type="ECO:0000312" key="37">
    <source>
        <dbReference type="EMBL" id="CAR93565.1"/>
    </source>
</evidence>
<evidence type="ECO:0000312" key="38">
    <source>
        <dbReference type="EMBL" id="CAR93566.1"/>
    </source>
</evidence>
<evidence type="ECO:0000312" key="39">
    <source>
        <dbReference type="EMBL" id="CAR93567.1"/>
    </source>
</evidence>
<evidence type="ECO:0000312" key="40">
    <source>
        <dbReference type="EMBL" id="CAR93568.1"/>
    </source>
</evidence>
<evidence type="ECO:0000312" key="41">
    <source>
        <dbReference type="EMBL" id="CAR93569.1"/>
    </source>
</evidence>
<evidence type="ECO:0000312" key="42">
    <source>
        <dbReference type="EMBL" id="CAR93570.1"/>
    </source>
</evidence>
<evidence type="ECO:0000312" key="43">
    <source>
        <dbReference type="EMBL" id="CAR93571.1"/>
    </source>
</evidence>
<evidence type="ECO:0000312" key="44">
    <source>
        <dbReference type="FlyBase" id="FBgn0015795"/>
    </source>
</evidence>
<evidence type="ECO:0000312" key="45">
    <source>
        <dbReference type="Proteomes" id="UP000000803"/>
    </source>
</evidence>
<gene>
    <name evidence="44" type="primary">Rab7</name>
    <name evidence="17" type="synonym">Rab-7</name>
    <name evidence="17" type="synonym">Rab-r7</name>
    <name evidence="17" type="synonym">Rab7A</name>
    <name evidence="44" type="ORF">CG5915</name>
</gene>
<comment type="function">
    <text evidence="4 5 6 7 8 9 10 11 12 14 15">Small GTPase which cycles between active GTP-bound and inactive GDP-bound states (Probable). In its active state, binds to a variety of effector proteins playing a key role in the regulation of endo-lysosomal trafficking (Probable). Involved in microtubule minus and plus end-directed endosomal migration and positioning, and endosome-lysosome transport through different protein-protein interaction cascades (Probable). Governs early-to-late endosomal to lysosomal maturation (PubMed:23418349, PubMed:24327558). Controls endocytic cargo sorting towards the late endosome facilitating its eventual endolysosomal-mediated degradation (PubMed:11136982). Together with Rab2 involved in promoting fusion of autophagosomes and endosomes with lysosomes probably through recruitment of the HOPS tethering complex (PubMed:28063257, PubMed:28483915, PubMed:31194677). Involved in biosynthetic transport to lysosomes (Probable). Involved in establishing morphogen concentration gradients, for example of the TGF-beta homolog dpp/decapentaplegic, during pattern formation and organogenesis (PubMed:11136982). Together with the Mon1-Ccz1 complex, required for autolysosome formation in fat cells and autophagic degradation during starvation-induced basal and developmental autophagy (PubMed:27559127). Together with Mon1, regulates levels of postsynaptic glutamate receptor GluRIIA in the neuromuscular junction (NMJ) presynapse (PubMed:32658990). Required for autophagocytosis-dependent remodeling of myofibrils and transverse-tubules (T-tubules) during metamorphosis (PubMed:28063257). Involved in intracellular trafficking of the carbohydrate transporter Tret1 in glial cells of the blood brain barrier, influencing its subcellular localization and protein levels (PubMed:34032568).</text>
</comment>
<comment type="catalytic activity">
    <reaction evidence="1">
        <text>GTP + H2O = GDP + phosphate + H(+)</text>
        <dbReference type="Rhea" id="RHEA:19669"/>
        <dbReference type="ChEBI" id="CHEBI:15377"/>
        <dbReference type="ChEBI" id="CHEBI:15378"/>
        <dbReference type="ChEBI" id="CHEBI:37565"/>
        <dbReference type="ChEBI" id="CHEBI:43474"/>
        <dbReference type="ChEBI" id="CHEBI:58189"/>
        <dbReference type="EC" id="3.6.5.2"/>
    </reaction>
    <physiologicalReaction direction="left-to-right" evidence="1">
        <dbReference type="Rhea" id="RHEA:19670"/>
    </physiologicalReaction>
</comment>
<comment type="subcellular location">
    <subcellularLocation>
        <location evidence="6">Early endosome membrane</location>
        <topology evidence="14">Lipid-anchor</topology>
        <orientation evidence="14">Cytoplasmic side</orientation>
    </subcellularLocation>
    <subcellularLocation>
        <location evidence="4 5 6">Late endosome membrane</location>
        <topology evidence="14">Lipid-anchor</topology>
        <orientation evidence="14">Cytoplasmic side</orientation>
    </subcellularLocation>
    <subcellularLocation>
        <location evidence="6">Lysosome membrane</location>
        <topology evidence="14">Lipid-anchor</topology>
        <orientation evidence="14">Cytoplasmic side</orientation>
    </subcellularLocation>
    <subcellularLocation>
        <location evidence="7 9">Cytoplasmic vesicle</location>
        <location evidence="7 9">Autophagosome membrane</location>
        <topology evidence="14">Lipid-anchor</topology>
        <orientation evidence="14">Cytoplasmic side</orientation>
    </subcellularLocation>
    <subcellularLocation>
        <location evidence="9">Autolysosome membrane</location>
        <topology evidence="14">Lipid-anchor</topology>
        <orientation evidence="14">Cytoplasmic side</orientation>
    </subcellularLocation>
    <subcellularLocation>
        <location evidence="6 11">Presynapse</location>
    </subcellularLocation>
    <subcellularLocation>
        <location evidence="6">Perikaryon</location>
    </subcellularLocation>
    <text evidence="5 6 7 9">Partially colocalizes with the early endosomal marker Rab5 and the lysosomal marker spin/spinster (PubMed:24327558). Recruited to endosomal and autophagosomal membranes in a Mon1-Ccz1 guanyl-nucleotide exchange factor complex-dependent mechanism (PubMed:23418349, PubMed:27559127). Recruitment to endosomes is not reliant on phosphatidylinositol 3-phosphate (PtdIns[3]P) enrichment (PubMed:23418349). Colocalizes to autolysosomes with active GTP-bound Rab2 (PubMed:28483915).</text>
</comment>
<comment type="tissue specificity">
    <text evidence="6">Expressed in eye (at protein level).</text>
</comment>
<comment type="developmental stage">
    <text evidence="6 7 11">During pupal development expressed in the brain (at protein level) (PubMed:24327558). Enriched in the presynaptic boutons of larval motor neurons and in the surrounding muscle cells (at protein level) (PubMed:24327558, PubMed:32658990). Expressed in 3rd instar larvae (at protein level) (PubMed:27559127).</text>
</comment>
<comment type="disruption phenotype">
    <text evidence="6 7 8 12">Pupal lethal with no gross morphological abnormalities (PubMed:24327558, PubMed:27559127). No effect on overall brain structure or photoreceptor differentiation and axon pathfinding (PubMed:24327558). Accumulation of autophagosomes and reduced number of autolysosomes in fat cells (PubMed:27559127). Impaired lysosomal degradation of endocytosed Notch and Boss receptors in the developing eye (PubMed:27559127). Accumulation of endosomal marker Hrs and photoreceptor membrane protein chp/Chaoptin in the brain (PubMed:24327558). Targeted knockout in photoreceptor cells results in progressive, stimulation-dependent loss of synaptic function and ultimately the degeneration of the entire neuron (PubMed:24327558). Reduced electrical activity in the retina and disruption of photoreceptor rhabdomere structures in the ommatidium (PubMed:24327558). Conditional RNAi-mediated knock-down in muscle cells disrupts transverse-tubule (T-tubule) and myofibril remodeling in internal oblique muscles during metamorphosis from 12 to 18 hours after pupal formation, with an accumulation of nondegraded autophagosomes probably due to disruption of autophagosome-lysosome fusion (PubMed:28063257). Pan-glial cell-specific or blood brain barrier-specific RNAi-mediated knockdown results in reduced levels of the carbohydrate transporter Tret1 in perineurial glia (PubMed:34032568).</text>
</comment>
<comment type="similarity">
    <text evidence="14">Belongs to the small GTPase superfamily. Rab family.</text>
</comment>
<reference evidence="16" key="1">
    <citation type="journal article" date="1998" name="Genetics">
        <title>Dominant defects in Drosophila eye pigmentation resulting from a euchromatin-heterochromatin fusion gene.</title>
        <authorList>
            <person name="Rong Y.S."/>
            <person name="Golic K.G."/>
        </authorList>
    </citation>
    <scope>NUCLEOTIDE SEQUENCE [GENOMIC DNA]</scope>
</reference>
<reference evidence="18" key="2">
    <citation type="journal article" date="2000" name="Cell">
        <title>Gradient formation of the TGF-beta homolog Dpp.</title>
        <authorList>
            <person name="Entchev E.V."/>
            <person name="Schwabedissen A."/>
            <person name="Gonzalez-Gaitan M."/>
        </authorList>
    </citation>
    <scope>NUCLEOTIDE SEQUENCE [MRNA]</scope>
    <scope>FUNCTION</scope>
    <scope>SUBCELLULAR LOCATION</scope>
    <scope>MUTAGENESIS OF GLN-67</scope>
</reference>
<reference evidence="21" key="3">
    <citation type="submission" date="1999-12" db="EMBL/GenBank/DDBJ databases">
        <title>Drosophila Rab7 protein (Rab7) mRNA.</title>
        <authorList>
            <person name="Ozaki K."/>
            <person name="Shimizu H."/>
            <person name="Satoh A.K."/>
        </authorList>
    </citation>
    <scope>NUCLEOTIDE SEQUENCE [MRNA]</scope>
</reference>
<reference evidence="45" key="4">
    <citation type="journal article" date="2000" name="Science">
        <title>The genome sequence of Drosophila melanogaster.</title>
        <authorList>
            <person name="Adams M.D."/>
            <person name="Celniker S.E."/>
            <person name="Holt R.A."/>
            <person name="Evans C.A."/>
            <person name="Gocayne J.D."/>
            <person name="Amanatides P.G."/>
            <person name="Scherer S.E."/>
            <person name="Li P.W."/>
            <person name="Hoskins R.A."/>
            <person name="Galle R.F."/>
            <person name="George R.A."/>
            <person name="Lewis S.E."/>
            <person name="Richards S."/>
            <person name="Ashburner M."/>
            <person name="Henderson S.N."/>
            <person name="Sutton G.G."/>
            <person name="Wortman J.R."/>
            <person name="Yandell M.D."/>
            <person name="Zhang Q."/>
            <person name="Chen L.X."/>
            <person name="Brandon R.C."/>
            <person name="Rogers Y.-H.C."/>
            <person name="Blazej R.G."/>
            <person name="Champe M."/>
            <person name="Pfeiffer B.D."/>
            <person name="Wan K.H."/>
            <person name="Doyle C."/>
            <person name="Baxter E.G."/>
            <person name="Helt G."/>
            <person name="Nelson C.R."/>
            <person name="Miklos G.L.G."/>
            <person name="Abril J.F."/>
            <person name="Agbayani A."/>
            <person name="An H.-J."/>
            <person name="Andrews-Pfannkoch C."/>
            <person name="Baldwin D."/>
            <person name="Ballew R.M."/>
            <person name="Basu A."/>
            <person name="Baxendale J."/>
            <person name="Bayraktaroglu L."/>
            <person name="Beasley E.M."/>
            <person name="Beeson K.Y."/>
            <person name="Benos P.V."/>
            <person name="Berman B.P."/>
            <person name="Bhandari D."/>
            <person name="Bolshakov S."/>
            <person name="Borkova D."/>
            <person name="Botchan M.R."/>
            <person name="Bouck J."/>
            <person name="Brokstein P."/>
            <person name="Brottier P."/>
            <person name="Burtis K.C."/>
            <person name="Busam D.A."/>
            <person name="Butler H."/>
            <person name="Cadieu E."/>
            <person name="Center A."/>
            <person name="Chandra I."/>
            <person name="Cherry J.M."/>
            <person name="Cawley S."/>
            <person name="Dahlke C."/>
            <person name="Davenport L.B."/>
            <person name="Davies P."/>
            <person name="de Pablos B."/>
            <person name="Delcher A."/>
            <person name="Deng Z."/>
            <person name="Mays A.D."/>
            <person name="Dew I."/>
            <person name="Dietz S.M."/>
            <person name="Dodson K."/>
            <person name="Doup L.E."/>
            <person name="Downes M."/>
            <person name="Dugan-Rocha S."/>
            <person name="Dunkov B.C."/>
            <person name="Dunn P."/>
            <person name="Durbin K.J."/>
            <person name="Evangelista C.C."/>
            <person name="Ferraz C."/>
            <person name="Ferriera S."/>
            <person name="Fleischmann W."/>
            <person name="Fosler C."/>
            <person name="Gabrielian A.E."/>
            <person name="Garg N.S."/>
            <person name="Gelbart W.M."/>
            <person name="Glasser K."/>
            <person name="Glodek A."/>
            <person name="Gong F."/>
            <person name="Gorrell J.H."/>
            <person name="Gu Z."/>
            <person name="Guan P."/>
            <person name="Harris M."/>
            <person name="Harris N.L."/>
            <person name="Harvey D.A."/>
            <person name="Heiman T.J."/>
            <person name="Hernandez J.R."/>
            <person name="Houck J."/>
            <person name="Hostin D."/>
            <person name="Houston K.A."/>
            <person name="Howland T.J."/>
            <person name="Wei M.-H."/>
            <person name="Ibegwam C."/>
            <person name="Jalali M."/>
            <person name="Kalush F."/>
            <person name="Karpen G.H."/>
            <person name="Ke Z."/>
            <person name="Kennison J.A."/>
            <person name="Ketchum K.A."/>
            <person name="Kimmel B.E."/>
            <person name="Kodira C.D."/>
            <person name="Kraft C.L."/>
            <person name="Kravitz S."/>
            <person name="Kulp D."/>
            <person name="Lai Z."/>
            <person name="Lasko P."/>
            <person name="Lei Y."/>
            <person name="Levitsky A.A."/>
            <person name="Li J.H."/>
            <person name="Li Z."/>
            <person name="Liang Y."/>
            <person name="Lin X."/>
            <person name="Liu X."/>
            <person name="Mattei B."/>
            <person name="McIntosh T.C."/>
            <person name="McLeod M.P."/>
            <person name="McPherson D."/>
            <person name="Merkulov G."/>
            <person name="Milshina N.V."/>
            <person name="Mobarry C."/>
            <person name="Morris J."/>
            <person name="Moshrefi A."/>
            <person name="Mount S.M."/>
            <person name="Moy M."/>
            <person name="Murphy B."/>
            <person name="Murphy L."/>
            <person name="Muzny D.M."/>
            <person name="Nelson D.L."/>
            <person name="Nelson D.R."/>
            <person name="Nelson K.A."/>
            <person name="Nixon K."/>
            <person name="Nusskern D.R."/>
            <person name="Pacleb J.M."/>
            <person name="Palazzolo M."/>
            <person name="Pittman G.S."/>
            <person name="Pan S."/>
            <person name="Pollard J."/>
            <person name="Puri V."/>
            <person name="Reese M.G."/>
            <person name="Reinert K."/>
            <person name="Remington K."/>
            <person name="Saunders R.D.C."/>
            <person name="Scheeler F."/>
            <person name="Shen H."/>
            <person name="Shue B.C."/>
            <person name="Siden-Kiamos I."/>
            <person name="Simpson M."/>
            <person name="Skupski M.P."/>
            <person name="Smith T.J."/>
            <person name="Spier E."/>
            <person name="Spradling A.C."/>
            <person name="Stapleton M."/>
            <person name="Strong R."/>
            <person name="Sun E."/>
            <person name="Svirskas R."/>
            <person name="Tector C."/>
            <person name="Turner R."/>
            <person name="Venter E."/>
            <person name="Wang A.H."/>
            <person name="Wang X."/>
            <person name="Wang Z.-Y."/>
            <person name="Wassarman D.A."/>
            <person name="Weinstock G.M."/>
            <person name="Weissenbach J."/>
            <person name="Williams S.M."/>
            <person name="Woodage T."/>
            <person name="Worley K.C."/>
            <person name="Wu D."/>
            <person name="Yang S."/>
            <person name="Yao Q.A."/>
            <person name="Ye J."/>
            <person name="Yeh R.-F."/>
            <person name="Zaveri J.S."/>
            <person name="Zhan M."/>
            <person name="Zhang G."/>
            <person name="Zhao Q."/>
            <person name="Zheng L."/>
            <person name="Zheng X.H."/>
            <person name="Zhong F.N."/>
            <person name="Zhong W."/>
            <person name="Zhou X."/>
            <person name="Zhu S.C."/>
            <person name="Zhu X."/>
            <person name="Smith H.O."/>
            <person name="Gibbs R.A."/>
            <person name="Myers E.W."/>
            <person name="Rubin G.M."/>
            <person name="Venter J.C."/>
        </authorList>
    </citation>
    <scope>NUCLEOTIDE SEQUENCE [LARGE SCALE GENOMIC DNA]</scope>
    <source>
        <strain evidence="45">Berkeley</strain>
    </source>
</reference>
<reference evidence="45" key="5">
    <citation type="journal article" date="2002" name="Genome Biol.">
        <title>Annotation of the Drosophila melanogaster euchromatic genome: a systematic review.</title>
        <authorList>
            <person name="Misra S."/>
            <person name="Crosby M.A."/>
            <person name="Mungall C.J."/>
            <person name="Matthews B.B."/>
            <person name="Campbell K.S."/>
            <person name="Hradecky P."/>
            <person name="Huang Y."/>
            <person name="Kaminker J.S."/>
            <person name="Millburn G.H."/>
            <person name="Prochnik S.E."/>
            <person name="Smith C.D."/>
            <person name="Tupy J.L."/>
            <person name="Whitfield E.J."/>
            <person name="Bayraktaroglu L."/>
            <person name="Berman B.P."/>
            <person name="Bettencourt B.R."/>
            <person name="Celniker S.E."/>
            <person name="de Grey A.D.N.J."/>
            <person name="Drysdale R.A."/>
            <person name="Harris N.L."/>
            <person name="Richter J."/>
            <person name="Russo S."/>
            <person name="Schroeder A.J."/>
            <person name="Shu S.Q."/>
            <person name="Stapleton M."/>
            <person name="Yamada C."/>
            <person name="Ashburner M."/>
            <person name="Gelbart W.M."/>
            <person name="Rubin G.M."/>
            <person name="Lewis S.E."/>
        </authorList>
    </citation>
    <scope>GENOME REANNOTATION</scope>
    <source>
        <strain evidence="45">Berkeley</strain>
    </source>
</reference>
<reference evidence="22" key="6">
    <citation type="journal article" date="2006" name="Genetics">
        <title>Widespread adaptive evolution of Drosophila genes with sex-biased expression.</title>
        <authorList>
            <person name="Proeschel M."/>
            <person name="Zhang Z."/>
            <person name="Parsch J."/>
        </authorList>
    </citation>
    <scope>NUCLEOTIDE SEQUENCE [LARGE SCALE GENOMIC DNA]</scope>
    <source>
        <strain evidence="25">ZBMEL131</strain>
        <strain evidence="26">ZBMEL145</strain>
        <strain evidence="27">ZBMEL157</strain>
        <strain evidence="28">ZBMEL186</strain>
        <strain evidence="29">ZBMEL191</strain>
        <strain evidence="30">ZBMEL377</strain>
        <strain evidence="31">ZBMEL384</strain>
        <strain evidence="32">ZBMEL398</strain>
        <strain evidence="22">ZBMEL82</strain>
        <strain evidence="23">ZBMEL84</strain>
        <strain evidence="24">ZBMEL95</strain>
    </source>
</reference>
<reference evidence="33" key="7">
    <citation type="journal article" date="2009" name="Mol. Biol. Evol.">
        <title>The influence of demography and weak selection on the McDonald-Kreitman test: an empirical study in Drosophila.</title>
        <authorList>
            <person name="Parsch J."/>
            <person name="Zhang Z."/>
            <person name="Baines J.F."/>
        </authorList>
    </citation>
    <scope>NUCLEOTIDE SEQUENCE [LARGE SCALE GENOMIC DNA]</scope>
    <source>
        <strain evidence="33">MEL01</strain>
        <strain evidence="34">MEL02</strain>
        <strain evidence="35">MEL11</strain>
        <strain evidence="36">MEL12</strain>
        <strain evidence="37">MEL14</strain>
        <strain evidence="38">MEL15</strain>
        <strain evidence="39">MEL16</strain>
        <strain evidence="40">MEL17</strain>
        <strain evidence="41">MEL18</strain>
        <strain evidence="42">MEL19</strain>
        <strain evidence="43">MEL20</strain>
    </source>
</reference>
<reference evidence="19" key="8">
    <citation type="journal article" date="2002" name="Genome Biol.">
        <title>A Drosophila full-length cDNA resource.</title>
        <authorList>
            <person name="Stapleton M."/>
            <person name="Carlson J.W."/>
            <person name="Brokstein P."/>
            <person name="Yu C."/>
            <person name="Champe M."/>
            <person name="George R.A."/>
            <person name="Guarin H."/>
            <person name="Kronmiller B."/>
            <person name="Pacleb J.M."/>
            <person name="Park S."/>
            <person name="Wan K.H."/>
            <person name="Rubin G.M."/>
            <person name="Celniker S.E."/>
        </authorList>
    </citation>
    <scope>NUCLEOTIDE SEQUENCE [LARGE SCALE MRNA]</scope>
    <source>
        <strain evidence="19">Berkeley</strain>
        <tissue evidence="19">Head</tissue>
    </source>
</reference>
<reference evidence="20" key="9">
    <citation type="submission" date="2010-04" db="EMBL/GenBank/DDBJ databases">
        <authorList>
            <person name="Carlson J."/>
            <person name="Booth B."/>
            <person name="Frise E."/>
            <person name="Sandler J."/>
            <person name="Wan K."/>
            <person name="Yu C."/>
            <person name="Celniker S."/>
        </authorList>
    </citation>
    <scope>NUCLEOTIDE SEQUENCE [LARGE SCALE MRNA]</scope>
</reference>
<reference evidence="14" key="10">
    <citation type="journal article" date="2013" name="Elife">
        <title>Charcot-Marie-Tooth 2B mutations in rab7 cause dosage-dependent neurodegeneration due to partial loss of function.</title>
        <authorList>
            <person name="Cherry S."/>
            <person name="Jin E.J."/>
            <person name="Ozel M.N."/>
            <person name="Lu Z."/>
            <person name="Agi E."/>
            <person name="Wang D."/>
            <person name="Jung W.H."/>
            <person name="Epstein D."/>
            <person name="Meinertzhagen I.A."/>
            <person name="Chan C.C."/>
            <person name="Hiesinger P.R."/>
        </authorList>
    </citation>
    <scope>FUNCTION</scope>
    <scope>SUBCELLULAR LOCATION</scope>
    <scope>TISSUE SPECIFICITY</scope>
    <scope>DEVELOPMENTAL STAGE</scope>
    <scope>DISRUPTION PHENOTYPE</scope>
    <scope>MUTAGENESIS OF THR-22; GLN-67; LEU-129; LYS-157; ASN-161 AND VAL-162</scope>
</reference>
<reference evidence="14" key="11">
    <citation type="journal article" date="2013" name="J. Cell Sci.">
        <title>Dmon1 controls recruitment of Rab7 to maturing endosomes in Drosophila.</title>
        <authorList>
            <person name="Yousefian J."/>
            <person name="Troost T."/>
            <person name="Grawe F."/>
            <person name="Sasamura T."/>
            <person name="Fortini M."/>
            <person name="Klein T."/>
        </authorList>
    </citation>
    <scope>FUNCTION</scope>
    <scope>SUBCELLULAR LOCATION</scope>
</reference>
<reference evidence="14" key="12">
    <citation type="journal article" date="2016" name="Mol. Biol. Cell">
        <title>The Ccz1-Mon1-Rab7 module and Rab5 control distinct steps of autophagy.</title>
        <authorList>
            <person name="Hegedus K."/>
            <person name="Takats S."/>
            <person name="Boda A."/>
            <person name="Jipa A."/>
            <person name="Nagy P."/>
            <person name="Varga K."/>
            <person name="Kovacs A.L."/>
            <person name="Juhasz G."/>
        </authorList>
    </citation>
    <scope>FUNCTION</scope>
    <scope>SUBCELLULAR LOCATION</scope>
    <scope>DEVELOPMENTAL STAGE</scope>
    <scope>DISRUPTION PHENOTYPE</scope>
</reference>
<reference key="13">
    <citation type="journal article" date="2017" name="Elife">
        <title>Genetic screen in Drosophila muscle identifies autophagy-mediated T-tubule remodeling and a Rab2 role in autophagy.</title>
        <authorList>
            <person name="Fujita N."/>
            <person name="Huang W."/>
            <person name="Lin T.H."/>
            <person name="Groulx J.F."/>
            <person name="Jean S."/>
            <person name="Nguyen J."/>
            <person name="Kuchitsu Y."/>
            <person name="Koyama-Honda I."/>
            <person name="Mizushima N."/>
            <person name="Fukuda M."/>
            <person name="Kiger A.A."/>
        </authorList>
    </citation>
    <scope>FUNCTION</scope>
    <scope>DISRUPTION PHENOTYPE</scope>
</reference>
<reference key="14">
    <citation type="journal article" date="2017" name="J. Cell Biol.">
        <title>Rab2 promotes autophagic and endocytic lysosomal degradation.</title>
        <authorList>
            <person name="Lorincz P."/>
            <person name="Toth S."/>
            <person name="Benko P."/>
            <person name="Lakatos Z."/>
            <person name="Boda A."/>
            <person name="Glatz G."/>
            <person name="Zobel M."/>
            <person name="Bisi S."/>
            <person name="Hegedus K."/>
            <person name="Takats S."/>
            <person name="Scita G."/>
            <person name="Juhasz G."/>
        </authorList>
    </citation>
    <scope>FUNCTION</scope>
    <scope>SUBCELLULAR LOCATION</scope>
</reference>
<reference key="15">
    <citation type="journal article" date="2019" name="Elife">
        <title>Vps8 overexpression inhibits HOPS-dependent trafficking routes by outcompeting Vps41/Lt.</title>
        <authorList>
            <person name="Lorincz P."/>
            <person name="Kenez L.A."/>
            <person name="Toth S."/>
            <person name="Kiss V."/>
            <person name="Varga A."/>
            <person name="Csizmadia T."/>
            <person name="Simon-Vecsei Z."/>
            <person name="Juhasz G."/>
        </authorList>
    </citation>
    <scope>FUNCTION</scope>
</reference>
<reference evidence="14" key="16">
    <citation type="journal article" date="2020" name="Int. J. Dev. Biol.">
        <title>Drosophila Mon1 and Rab7 interact to regulate glutamate receptor levels at the neuromuscular junction.</title>
        <authorList>
            <person name="Basargekar A."/>
            <person name="Yogi S."/>
            <person name="Mushtaq Z."/>
            <person name="Deivasigamani S."/>
            <person name="Kumar V."/>
            <person name="Ratnaparkhi G.S."/>
            <person name="Ratnaparkhi A."/>
        </authorList>
    </citation>
    <scope>FUNCTION</scope>
    <scope>SUBCELLULAR LOCATION</scope>
    <scope>DEVELOPMENTAL STAGE</scope>
</reference>
<reference key="17">
    <citation type="journal article" date="2021" name="Elife">
        <title>Starvation-induced regulation of carbohydrate transport at the blood-brain barrier is TGF-beta-signaling dependent.</title>
        <authorList>
            <person name="Hertenstein H."/>
            <person name="McMullen E."/>
            <person name="Weiler A."/>
            <person name="Volkenhoff A."/>
            <person name="Becker H.M."/>
            <person name="Schirmeier S."/>
        </authorList>
    </citation>
    <scope>FUNCTION</scope>
    <scope>DISRUPTION PHENOTYPE</scope>
    <scope>MUTAGENESIS OF THR-22</scope>
</reference>
<proteinExistence type="evidence at protein level"/>
<dbReference type="EC" id="3.6.5.2" evidence="1"/>
<dbReference type="EMBL" id="AF079459">
    <property type="protein sequence ID" value="AAC32270.1"/>
    <property type="molecule type" value="Genomic_DNA"/>
</dbReference>
<dbReference type="EMBL" id="AF263363">
    <property type="protein sequence ID" value="AAF73041.1"/>
    <property type="molecule type" value="mRNA"/>
</dbReference>
<dbReference type="EMBL" id="AB035672">
    <property type="protein sequence ID" value="BAA88245.1"/>
    <property type="molecule type" value="mRNA"/>
</dbReference>
<dbReference type="EMBL" id="AE014297">
    <property type="protein sequence ID" value="AAF56218.1"/>
    <property type="molecule type" value="Genomic_DNA"/>
</dbReference>
<dbReference type="EMBL" id="AE014297">
    <property type="protein sequence ID" value="AFH06594.1"/>
    <property type="molecule type" value="Genomic_DNA"/>
</dbReference>
<dbReference type="EMBL" id="AE014297">
    <property type="protein sequence ID" value="AFH06595.1"/>
    <property type="molecule type" value="Genomic_DNA"/>
</dbReference>
<dbReference type="EMBL" id="AM294823">
    <property type="protein sequence ID" value="CAL26809.1"/>
    <property type="molecule type" value="Genomic_DNA"/>
</dbReference>
<dbReference type="EMBL" id="AM294824">
    <property type="protein sequence ID" value="CAL26810.1"/>
    <property type="molecule type" value="Genomic_DNA"/>
</dbReference>
<dbReference type="EMBL" id="AM294825">
    <property type="protein sequence ID" value="CAL26811.1"/>
    <property type="molecule type" value="Genomic_DNA"/>
</dbReference>
<dbReference type="EMBL" id="AM294826">
    <property type="protein sequence ID" value="CAL26812.1"/>
    <property type="molecule type" value="Genomic_DNA"/>
</dbReference>
<dbReference type="EMBL" id="AM294827">
    <property type="protein sequence ID" value="CAL26813.1"/>
    <property type="molecule type" value="Genomic_DNA"/>
</dbReference>
<dbReference type="EMBL" id="AM294828">
    <property type="protein sequence ID" value="CAL26814.1"/>
    <property type="molecule type" value="Genomic_DNA"/>
</dbReference>
<dbReference type="EMBL" id="AM294829">
    <property type="protein sequence ID" value="CAL26815.1"/>
    <property type="molecule type" value="Genomic_DNA"/>
</dbReference>
<dbReference type="EMBL" id="AM294830">
    <property type="protein sequence ID" value="CAL26816.1"/>
    <property type="molecule type" value="Genomic_DNA"/>
</dbReference>
<dbReference type="EMBL" id="AM294831">
    <property type="protein sequence ID" value="CAL26817.1"/>
    <property type="molecule type" value="Genomic_DNA"/>
</dbReference>
<dbReference type="EMBL" id="AM294832">
    <property type="protein sequence ID" value="CAL26818.1"/>
    <property type="molecule type" value="Genomic_DNA"/>
</dbReference>
<dbReference type="EMBL" id="AM294833">
    <property type="protein sequence ID" value="CAL26819.1"/>
    <property type="molecule type" value="Genomic_DNA"/>
</dbReference>
<dbReference type="EMBL" id="FM245635">
    <property type="protein sequence ID" value="CAR93561.1"/>
    <property type="molecule type" value="Genomic_DNA"/>
</dbReference>
<dbReference type="EMBL" id="FM245636">
    <property type="protein sequence ID" value="CAR93562.1"/>
    <property type="molecule type" value="Genomic_DNA"/>
</dbReference>
<dbReference type="EMBL" id="FM245637">
    <property type="protein sequence ID" value="CAR93563.1"/>
    <property type="molecule type" value="Genomic_DNA"/>
</dbReference>
<dbReference type="EMBL" id="FM245638">
    <property type="protein sequence ID" value="CAR93564.1"/>
    <property type="molecule type" value="Genomic_DNA"/>
</dbReference>
<dbReference type="EMBL" id="FM245639">
    <property type="protein sequence ID" value="CAR93565.1"/>
    <property type="molecule type" value="Genomic_DNA"/>
</dbReference>
<dbReference type="EMBL" id="FM245640">
    <property type="protein sequence ID" value="CAR93566.1"/>
    <property type="molecule type" value="Genomic_DNA"/>
</dbReference>
<dbReference type="EMBL" id="FM245641">
    <property type="protein sequence ID" value="CAR93567.1"/>
    <property type="molecule type" value="Genomic_DNA"/>
</dbReference>
<dbReference type="EMBL" id="FM245642">
    <property type="protein sequence ID" value="CAR93568.1"/>
    <property type="molecule type" value="Genomic_DNA"/>
</dbReference>
<dbReference type="EMBL" id="FM245643">
    <property type="protein sequence ID" value="CAR93569.1"/>
    <property type="molecule type" value="Genomic_DNA"/>
</dbReference>
<dbReference type="EMBL" id="FM245644">
    <property type="protein sequence ID" value="CAR93570.1"/>
    <property type="molecule type" value="Genomic_DNA"/>
</dbReference>
<dbReference type="EMBL" id="FM245645">
    <property type="protein sequence ID" value="CAR93571.1"/>
    <property type="molecule type" value="Genomic_DNA"/>
</dbReference>
<dbReference type="EMBL" id="AY060236">
    <property type="protein sequence ID" value="AAL25275.1"/>
    <property type="molecule type" value="mRNA"/>
</dbReference>
<dbReference type="EMBL" id="BT124755">
    <property type="protein sequence ID" value="ADF28796.1"/>
    <property type="molecule type" value="mRNA"/>
</dbReference>
<dbReference type="RefSeq" id="NP_001247276.1">
    <property type="nucleotide sequence ID" value="NM_001260347.1"/>
</dbReference>
<dbReference type="RefSeq" id="NP_001247277.1">
    <property type="nucleotide sequence ID" value="NM_001260348.2"/>
</dbReference>
<dbReference type="RefSeq" id="NP_524472.1">
    <property type="nucleotide sequence ID" value="NM_079748.4"/>
</dbReference>
<dbReference type="SMR" id="O76742"/>
<dbReference type="FunCoup" id="O76742">
    <property type="interactions" value="1948"/>
</dbReference>
<dbReference type="IntAct" id="O76742">
    <property type="interactions" value="53"/>
</dbReference>
<dbReference type="MINT" id="O76742"/>
<dbReference type="STRING" id="7227.FBpp0083891"/>
<dbReference type="PaxDb" id="7227-FBpp0083891"/>
<dbReference type="DNASU" id="42841"/>
<dbReference type="EnsemblMetazoa" id="FBtr0084503">
    <property type="protein sequence ID" value="FBpp0083891"/>
    <property type="gene ID" value="FBgn0015795"/>
</dbReference>
<dbReference type="EnsemblMetazoa" id="FBtr0308611">
    <property type="protein sequence ID" value="FBpp0300835"/>
    <property type="gene ID" value="FBgn0015795"/>
</dbReference>
<dbReference type="EnsemblMetazoa" id="FBtr0308612">
    <property type="protein sequence ID" value="FBpp0300836"/>
    <property type="gene ID" value="FBgn0015795"/>
</dbReference>
<dbReference type="GeneID" id="42841"/>
<dbReference type="KEGG" id="dme:Dmel_CG5915"/>
<dbReference type="UCSC" id="CG5915-RA">
    <property type="organism name" value="d. melanogaster"/>
</dbReference>
<dbReference type="AGR" id="FB:FBgn0015795"/>
<dbReference type="CTD" id="19349"/>
<dbReference type="FlyBase" id="FBgn0015795">
    <property type="gene designation" value="Rab7"/>
</dbReference>
<dbReference type="VEuPathDB" id="VectorBase:FBgn0015795"/>
<dbReference type="eggNOG" id="KOG0394">
    <property type="taxonomic scope" value="Eukaryota"/>
</dbReference>
<dbReference type="GeneTree" id="ENSGT00940000155864"/>
<dbReference type="HOGENOM" id="CLU_041217_10_6_1"/>
<dbReference type="InParanoid" id="O76742"/>
<dbReference type="OMA" id="FSHINSW"/>
<dbReference type="OrthoDB" id="1436450at2759"/>
<dbReference type="Reactome" id="R-DME-6798695">
    <property type="pathway name" value="Neutrophil degranulation"/>
</dbReference>
<dbReference type="Reactome" id="R-DME-8854214">
    <property type="pathway name" value="TBC/RABGAPs"/>
</dbReference>
<dbReference type="Reactome" id="R-DME-8873719">
    <property type="pathway name" value="RAB geranylgeranylation"/>
</dbReference>
<dbReference type="Reactome" id="R-DME-8876198">
    <property type="pathway name" value="RAB GEFs exchange GTP for GDP on RABs"/>
</dbReference>
<dbReference type="Reactome" id="R-DME-9013149">
    <property type="pathway name" value="RAC1 GTPase cycle"/>
</dbReference>
<dbReference type="Reactome" id="R-DME-9013404">
    <property type="pathway name" value="RAC2 GTPase cycle"/>
</dbReference>
<dbReference type="Reactome" id="R-DME-9013405">
    <property type="pathway name" value="RHOD GTPase cycle"/>
</dbReference>
<dbReference type="Reactome" id="R-DME-9013406">
    <property type="pathway name" value="RHOQ GTPase cycle"/>
</dbReference>
<dbReference type="Reactome" id="R-DME-9013407">
    <property type="pathway name" value="RHOH GTPase cycle"/>
</dbReference>
<dbReference type="Reactome" id="R-DME-9013408">
    <property type="pathway name" value="RHOG GTPase cycle"/>
</dbReference>
<dbReference type="Reactome" id="R-DME-9013423">
    <property type="pathway name" value="RAC3 GTPase cycle"/>
</dbReference>
<dbReference type="Reactome" id="R-DME-9035034">
    <property type="pathway name" value="RHOF GTPase cycle"/>
</dbReference>
<dbReference type="BioGRID-ORCS" id="42841">
    <property type="hits" value="1 hit in 1 CRISPR screen"/>
</dbReference>
<dbReference type="GenomeRNAi" id="42841"/>
<dbReference type="PRO" id="PR:O76742"/>
<dbReference type="Proteomes" id="UP000000803">
    <property type="component" value="Chromosome 3R"/>
</dbReference>
<dbReference type="Bgee" id="FBgn0015795">
    <property type="expression patterns" value="Expressed in embryonic/larval hemocyte (Drosophila) and 245 other cell types or tissues"/>
</dbReference>
<dbReference type="GO" id="GO:0120281">
    <property type="term" value="C:autolysosome membrane"/>
    <property type="evidence" value="ECO:0007669"/>
    <property type="project" value="UniProtKB-SubCell"/>
</dbReference>
<dbReference type="GO" id="GO:0000421">
    <property type="term" value="C:autophagosome membrane"/>
    <property type="evidence" value="ECO:0007669"/>
    <property type="project" value="UniProtKB-SubCell"/>
</dbReference>
<dbReference type="GO" id="GO:0005938">
    <property type="term" value="C:cell cortex"/>
    <property type="evidence" value="ECO:0000314"/>
    <property type="project" value="FlyBase"/>
</dbReference>
<dbReference type="GO" id="GO:0042995">
    <property type="term" value="C:cell projection"/>
    <property type="evidence" value="ECO:0007669"/>
    <property type="project" value="UniProtKB-KW"/>
</dbReference>
<dbReference type="GO" id="GO:0031901">
    <property type="term" value="C:early endosome membrane"/>
    <property type="evidence" value="ECO:0007669"/>
    <property type="project" value="UniProtKB-SubCell"/>
</dbReference>
<dbReference type="GO" id="GO:0005770">
    <property type="term" value="C:late endosome"/>
    <property type="evidence" value="ECO:0000314"/>
    <property type="project" value="FlyBase"/>
</dbReference>
<dbReference type="GO" id="GO:0031902">
    <property type="term" value="C:late endosome membrane"/>
    <property type="evidence" value="ECO:0000314"/>
    <property type="project" value="FlyBase"/>
</dbReference>
<dbReference type="GO" id="GO:0005764">
    <property type="term" value="C:lysosome"/>
    <property type="evidence" value="ECO:0000318"/>
    <property type="project" value="GO_Central"/>
</dbReference>
<dbReference type="GO" id="GO:0043025">
    <property type="term" value="C:neuronal cell body"/>
    <property type="evidence" value="ECO:0007005"/>
    <property type="project" value="FlyBase"/>
</dbReference>
<dbReference type="GO" id="GO:0043204">
    <property type="term" value="C:perikaryon"/>
    <property type="evidence" value="ECO:0007669"/>
    <property type="project" value="UniProtKB-SubCell"/>
</dbReference>
<dbReference type="GO" id="GO:0045335">
    <property type="term" value="C:phagocytic vesicle"/>
    <property type="evidence" value="ECO:0000314"/>
    <property type="project" value="FlyBase"/>
</dbReference>
<dbReference type="GO" id="GO:0005886">
    <property type="term" value="C:plasma membrane"/>
    <property type="evidence" value="ECO:0007005"/>
    <property type="project" value="FlyBase"/>
</dbReference>
<dbReference type="GO" id="GO:0098793">
    <property type="term" value="C:presynapse"/>
    <property type="evidence" value="ECO:0007669"/>
    <property type="project" value="UniProtKB-SubCell"/>
</dbReference>
<dbReference type="GO" id="GO:0045202">
    <property type="term" value="C:synapse"/>
    <property type="evidence" value="ECO:0007005"/>
    <property type="project" value="FlyBase"/>
</dbReference>
<dbReference type="GO" id="GO:0031982">
    <property type="term" value="C:vesicle"/>
    <property type="evidence" value="ECO:0000250"/>
    <property type="project" value="FlyBase"/>
</dbReference>
<dbReference type="GO" id="GO:0005525">
    <property type="term" value="F:GTP binding"/>
    <property type="evidence" value="ECO:0007669"/>
    <property type="project" value="UniProtKB-KW"/>
</dbReference>
<dbReference type="GO" id="GO:0003924">
    <property type="term" value="F:GTPase activity"/>
    <property type="evidence" value="ECO:0000250"/>
    <property type="project" value="FlyBase"/>
</dbReference>
<dbReference type="GO" id="GO:0044877">
    <property type="term" value="F:protein-containing complex binding"/>
    <property type="evidence" value="ECO:0000353"/>
    <property type="project" value="FlyBase"/>
</dbReference>
<dbReference type="GO" id="GO:0061909">
    <property type="term" value="P:autophagosome-lysosome fusion"/>
    <property type="evidence" value="ECO:0000315"/>
    <property type="project" value="UniProtKB"/>
</dbReference>
<dbReference type="GO" id="GO:0007298">
    <property type="term" value="P:border follicle cell migration"/>
    <property type="evidence" value="ECO:0000315"/>
    <property type="project" value="FlyBase"/>
</dbReference>
<dbReference type="GO" id="GO:0061883">
    <property type="term" value="P:clathrin-dependent endocytosis involved in vitellogenesis"/>
    <property type="evidence" value="ECO:0000314"/>
    <property type="project" value="FlyBase"/>
</dbReference>
<dbReference type="GO" id="GO:0032456">
    <property type="term" value="P:endocytic recycling"/>
    <property type="evidence" value="ECO:0000315"/>
    <property type="project" value="FlyBase"/>
</dbReference>
<dbReference type="GO" id="GO:0006897">
    <property type="term" value="P:endocytosis"/>
    <property type="evidence" value="ECO:0000315"/>
    <property type="project" value="FlyBase"/>
</dbReference>
<dbReference type="GO" id="GO:0016197">
    <property type="term" value="P:endosomal transport"/>
    <property type="evidence" value="ECO:0000315"/>
    <property type="project" value="FlyBase"/>
</dbReference>
<dbReference type="GO" id="GO:0034058">
    <property type="term" value="P:endosomal vesicle fusion"/>
    <property type="evidence" value="ECO:0000316"/>
    <property type="project" value="UniProtKB"/>
</dbReference>
<dbReference type="GO" id="GO:0008333">
    <property type="term" value="P:endosome to lysosome transport"/>
    <property type="evidence" value="ECO:0000315"/>
    <property type="project" value="FlyBase"/>
</dbReference>
<dbReference type="GO" id="GO:0032510">
    <property type="term" value="P:endosome to lysosome transport via multivesicular body sorting pathway"/>
    <property type="evidence" value="ECO:0000314"/>
    <property type="project" value="FlyBase"/>
</dbReference>
<dbReference type="GO" id="GO:1990182">
    <property type="term" value="P:exosomal secretion"/>
    <property type="evidence" value="ECO:0000315"/>
    <property type="project" value="FlyBase"/>
</dbReference>
<dbReference type="GO" id="GO:0006909">
    <property type="term" value="P:phagocytosis"/>
    <property type="evidence" value="ECO:0000270"/>
    <property type="project" value="FlyBase"/>
</dbReference>
<dbReference type="GO" id="GO:0090385">
    <property type="term" value="P:phagosome-lysosome fusion"/>
    <property type="evidence" value="ECO:0000318"/>
    <property type="project" value="GO_Central"/>
</dbReference>
<dbReference type="GO" id="GO:0015031">
    <property type="term" value="P:protein transport"/>
    <property type="evidence" value="ECO:0007669"/>
    <property type="project" value="UniProtKB-KW"/>
</dbReference>
<dbReference type="GO" id="GO:0032482">
    <property type="term" value="P:Rab protein signal transduction"/>
    <property type="evidence" value="ECO:0000250"/>
    <property type="project" value="FlyBase"/>
</dbReference>
<dbReference type="GO" id="GO:0160156">
    <property type="term" value="P:secretory granule-lysosome fusion"/>
    <property type="evidence" value="ECO:0000315"/>
    <property type="project" value="FlyBase"/>
</dbReference>
<dbReference type="GO" id="GO:0046718">
    <property type="term" value="P:symbiont entry into host cell"/>
    <property type="evidence" value="ECO:0007001"/>
    <property type="project" value="FlyBase"/>
</dbReference>
<dbReference type="GO" id="GO:0033292">
    <property type="term" value="P:T-tubule organization"/>
    <property type="evidence" value="ECO:0000315"/>
    <property type="project" value="UniProtKB"/>
</dbReference>
<dbReference type="GO" id="GO:0016192">
    <property type="term" value="P:vesicle-mediated transport"/>
    <property type="evidence" value="ECO:0000250"/>
    <property type="project" value="FlyBase"/>
</dbReference>
<dbReference type="GO" id="GO:0048190">
    <property type="term" value="P:wing disc dorsal/ventral pattern formation"/>
    <property type="evidence" value="ECO:0000315"/>
    <property type="project" value="FlyBase"/>
</dbReference>
<dbReference type="CDD" id="cd01862">
    <property type="entry name" value="Rab7"/>
    <property type="match status" value="1"/>
</dbReference>
<dbReference type="FunFam" id="3.40.50.300:FF:000086">
    <property type="entry name" value="Ras-related small GTPase"/>
    <property type="match status" value="1"/>
</dbReference>
<dbReference type="Gene3D" id="3.40.50.300">
    <property type="entry name" value="P-loop containing nucleotide triphosphate hydrolases"/>
    <property type="match status" value="1"/>
</dbReference>
<dbReference type="InterPro" id="IPR027417">
    <property type="entry name" value="P-loop_NTPase"/>
</dbReference>
<dbReference type="InterPro" id="IPR005225">
    <property type="entry name" value="Small_GTP-bd"/>
</dbReference>
<dbReference type="InterPro" id="IPR001806">
    <property type="entry name" value="Small_GTPase"/>
</dbReference>
<dbReference type="NCBIfam" id="TIGR00231">
    <property type="entry name" value="small_GTP"/>
    <property type="match status" value="1"/>
</dbReference>
<dbReference type="PANTHER" id="PTHR47981">
    <property type="entry name" value="RAB FAMILY"/>
    <property type="match status" value="1"/>
</dbReference>
<dbReference type="PANTHER" id="PTHR47981:SF20">
    <property type="entry name" value="RAS-RELATED PROTEIN RAB-7A"/>
    <property type="match status" value="1"/>
</dbReference>
<dbReference type="Pfam" id="PF00071">
    <property type="entry name" value="Ras"/>
    <property type="match status" value="1"/>
</dbReference>
<dbReference type="PRINTS" id="PR00449">
    <property type="entry name" value="RASTRNSFRMNG"/>
</dbReference>
<dbReference type="SMART" id="SM00175">
    <property type="entry name" value="RAB"/>
    <property type="match status" value="1"/>
</dbReference>
<dbReference type="SMART" id="SM00176">
    <property type="entry name" value="RAN"/>
    <property type="match status" value="1"/>
</dbReference>
<dbReference type="SMART" id="SM00173">
    <property type="entry name" value="RAS"/>
    <property type="match status" value="1"/>
</dbReference>
<dbReference type="SMART" id="SM00174">
    <property type="entry name" value="RHO"/>
    <property type="match status" value="1"/>
</dbReference>
<dbReference type="SUPFAM" id="SSF52540">
    <property type="entry name" value="P-loop containing nucleoside triphosphate hydrolases"/>
    <property type="match status" value="1"/>
</dbReference>
<dbReference type="PROSITE" id="PS51419">
    <property type="entry name" value="RAB"/>
    <property type="match status" value="1"/>
</dbReference>
<accession>O76742</accession>
<protein>
    <recommendedName>
        <fullName evidence="14">Ras-related protein Rab7</fullName>
        <shortName evidence="13">DRab7</shortName>
        <ecNumber evidence="1">3.6.5.2</ecNumber>
    </recommendedName>
    <alternativeName>
        <fullName evidence="14">Small monomeric GTPase Rab7</fullName>
    </alternativeName>
    <alternativeName>
        <fullName evidence="16">Small ras-like GTPase</fullName>
    </alternativeName>
</protein>
<keyword id="KW-0072">Autophagy</keyword>
<keyword id="KW-0966">Cell projection</keyword>
<keyword id="KW-0968">Cytoplasmic vesicle</keyword>
<keyword id="KW-0967">Endosome</keyword>
<keyword id="KW-0342">GTP-binding</keyword>
<keyword id="KW-0378">Hydrolase</keyword>
<keyword id="KW-0449">Lipoprotein</keyword>
<keyword id="KW-0458">Lysosome</keyword>
<keyword id="KW-0472">Membrane</keyword>
<keyword id="KW-0547">Nucleotide-binding</keyword>
<keyword id="KW-0597">Phosphoprotein</keyword>
<keyword id="KW-0636">Prenylation</keyword>
<keyword id="KW-0653">Protein transport</keyword>
<keyword id="KW-1185">Reference proteome</keyword>
<keyword id="KW-0770">Synapse</keyword>
<keyword id="KW-0813">Transport</keyword>